<name>AROB_PSECP</name>
<protein>
    <recommendedName>
        <fullName evidence="1">3-dehydroquinate synthase</fullName>
        <shortName evidence="1">DHQS</shortName>
        <ecNumber evidence="1">4.2.3.4</ecNumber>
    </recommendedName>
</protein>
<reference key="1">
    <citation type="submission" date="2009-01" db="EMBL/GenBank/DDBJ databases">
        <title>Complete sequence of chromosome of Arthrobacter chlorophenolicus A6.</title>
        <authorList>
            <consortium name="US DOE Joint Genome Institute"/>
            <person name="Lucas S."/>
            <person name="Copeland A."/>
            <person name="Lapidus A."/>
            <person name="Glavina del Rio T."/>
            <person name="Tice H."/>
            <person name="Bruce D."/>
            <person name="Goodwin L."/>
            <person name="Pitluck S."/>
            <person name="Goltsman E."/>
            <person name="Clum A."/>
            <person name="Larimer F."/>
            <person name="Land M."/>
            <person name="Hauser L."/>
            <person name="Kyrpides N."/>
            <person name="Mikhailova N."/>
            <person name="Jansson J."/>
            <person name="Richardson P."/>
        </authorList>
    </citation>
    <scope>NUCLEOTIDE SEQUENCE [LARGE SCALE GENOMIC DNA]</scope>
    <source>
        <strain>ATCC 700700 / DSM 12829 / CIP 107037 / JCM 12360 / KCTC 9906 / NCIMB 13794 / A6</strain>
    </source>
</reference>
<accession>B8H8V5</accession>
<keyword id="KW-0028">Amino-acid biosynthesis</keyword>
<keyword id="KW-0057">Aromatic amino acid biosynthesis</keyword>
<keyword id="KW-0170">Cobalt</keyword>
<keyword id="KW-0963">Cytoplasm</keyword>
<keyword id="KW-0456">Lyase</keyword>
<keyword id="KW-0479">Metal-binding</keyword>
<keyword id="KW-0520">NAD</keyword>
<keyword id="KW-0547">Nucleotide-binding</keyword>
<keyword id="KW-0862">Zinc</keyword>
<gene>
    <name evidence="1" type="primary">aroB</name>
    <name type="ordered locus">Achl_2009</name>
</gene>
<organism>
    <name type="scientific">Pseudarthrobacter chlorophenolicus (strain ATCC 700700 / DSM 12829 / CIP 107037 / JCM 12360 / KCTC 9906 / NCIMB 13794 / A6)</name>
    <name type="common">Arthrobacter chlorophenolicus</name>
    <dbReference type="NCBI Taxonomy" id="452863"/>
    <lineage>
        <taxon>Bacteria</taxon>
        <taxon>Bacillati</taxon>
        <taxon>Actinomycetota</taxon>
        <taxon>Actinomycetes</taxon>
        <taxon>Micrococcales</taxon>
        <taxon>Micrococcaceae</taxon>
        <taxon>Pseudarthrobacter</taxon>
    </lineage>
</organism>
<proteinExistence type="inferred from homology"/>
<sequence length="363" mass="38969">MNTSSTVIKVTGESAANNYDVVVGRGLLGTLPEILGERVRRVLVIHPRALRLTGDTVRDDLESAGFTALTAEIPDAEEGKHIQVAAFCWQVLGQNDFTRSDAIVAVGGGAVTDLAGFVAATWLRGVKVIHMPTSLLGMVDASVGGKTGINTAEGKNLVGAFHPPAAVLADLDTLDTLPRNELISGMAEVVKCGFIADPAILELVEKDFAAVTDPRSETLRELIERAIAVKAKVVSEDLKESGLREILNYGHTLGHAIELVERYSWRHGAAVSVGMMFAAELARSVGRLSDADADRHRSILEGLGLPVTYRRDRWQGLLDGMRRDKKSRGDLLRFVVLDGVAKPGILDVPDTSLLFAAYQEVAS</sequence>
<evidence type="ECO:0000255" key="1">
    <source>
        <dbReference type="HAMAP-Rule" id="MF_00110"/>
    </source>
</evidence>
<dbReference type="EC" id="4.2.3.4" evidence="1"/>
<dbReference type="EMBL" id="CP001341">
    <property type="protein sequence ID" value="ACL39983.1"/>
    <property type="molecule type" value="Genomic_DNA"/>
</dbReference>
<dbReference type="RefSeq" id="WP_015937201.1">
    <property type="nucleotide sequence ID" value="NC_011886.1"/>
</dbReference>
<dbReference type="SMR" id="B8H8V5"/>
<dbReference type="STRING" id="452863.Achl_2009"/>
<dbReference type="KEGG" id="ach:Achl_2009"/>
<dbReference type="eggNOG" id="COG0337">
    <property type="taxonomic scope" value="Bacteria"/>
</dbReference>
<dbReference type="HOGENOM" id="CLU_001201_0_3_11"/>
<dbReference type="OrthoDB" id="9806583at2"/>
<dbReference type="UniPathway" id="UPA00053">
    <property type="reaction ID" value="UER00085"/>
</dbReference>
<dbReference type="Proteomes" id="UP000002505">
    <property type="component" value="Chromosome"/>
</dbReference>
<dbReference type="GO" id="GO:0005737">
    <property type="term" value="C:cytoplasm"/>
    <property type="evidence" value="ECO:0007669"/>
    <property type="project" value="UniProtKB-SubCell"/>
</dbReference>
<dbReference type="GO" id="GO:0003856">
    <property type="term" value="F:3-dehydroquinate synthase activity"/>
    <property type="evidence" value="ECO:0007669"/>
    <property type="project" value="UniProtKB-UniRule"/>
</dbReference>
<dbReference type="GO" id="GO:0046872">
    <property type="term" value="F:metal ion binding"/>
    <property type="evidence" value="ECO:0007669"/>
    <property type="project" value="UniProtKB-KW"/>
</dbReference>
<dbReference type="GO" id="GO:0000166">
    <property type="term" value="F:nucleotide binding"/>
    <property type="evidence" value="ECO:0007669"/>
    <property type="project" value="UniProtKB-KW"/>
</dbReference>
<dbReference type="GO" id="GO:0008652">
    <property type="term" value="P:amino acid biosynthetic process"/>
    <property type="evidence" value="ECO:0007669"/>
    <property type="project" value="UniProtKB-KW"/>
</dbReference>
<dbReference type="GO" id="GO:0009073">
    <property type="term" value="P:aromatic amino acid family biosynthetic process"/>
    <property type="evidence" value="ECO:0007669"/>
    <property type="project" value="UniProtKB-KW"/>
</dbReference>
<dbReference type="GO" id="GO:0009423">
    <property type="term" value="P:chorismate biosynthetic process"/>
    <property type="evidence" value="ECO:0007669"/>
    <property type="project" value="UniProtKB-UniRule"/>
</dbReference>
<dbReference type="CDD" id="cd08195">
    <property type="entry name" value="DHQS"/>
    <property type="match status" value="1"/>
</dbReference>
<dbReference type="FunFam" id="3.40.50.1970:FF:000012">
    <property type="entry name" value="3-dehydroquinate synthase"/>
    <property type="match status" value="1"/>
</dbReference>
<dbReference type="Gene3D" id="3.40.50.1970">
    <property type="match status" value="1"/>
</dbReference>
<dbReference type="Gene3D" id="1.20.1090.10">
    <property type="entry name" value="Dehydroquinate synthase-like - alpha domain"/>
    <property type="match status" value="1"/>
</dbReference>
<dbReference type="HAMAP" id="MF_00110">
    <property type="entry name" value="DHQ_synthase"/>
    <property type="match status" value="1"/>
</dbReference>
<dbReference type="InterPro" id="IPR050071">
    <property type="entry name" value="Dehydroquinate_synthase"/>
</dbReference>
<dbReference type="InterPro" id="IPR016037">
    <property type="entry name" value="DHQ_synth_AroB"/>
</dbReference>
<dbReference type="InterPro" id="IPR030963">
    <property type="entry name" value="DHQ_synth_fam"/>
</dbReference>
<dbReference type="InterPro" id="IPR030960">
    <property type="entry name" value="DHQS/DOIS_N"/>
</dbReference>
<dbReference type="InterPro" id="IPR056179">
    <property type="entry name" value="DHQS_C"/>
</dbReference>
<dbReference type="NCBIfam" id="TIGR01357">
    <property type="entry name" value="aroB"/>
    <property type="match status" value="1"/>
</dbReference>
<dbReference type="PANTHER" id="PTHR43622">
    <property type="entry name" value="3-DEHYDROQUINATE SYNTHASE"/>
    <property type="match status" value="1"/>
</dbReference>
<dbReference type="PANTHER" id="PTHR43622:SF7">
    <property type="entry name" value="3-DEHYDROQUINATE SYNTHASE, CHLOROPLASTIC"/>
    <property type="match status" value="1"/>
</dbReference>
<dbReference type="Pfam" id="PF01761">
    <property type="entry name" value="DHQ_synthase"/>
    <property type="match status" value="1"/>
</dbReference>
<dbReference type="Pfam" id="PF24621">
    <property type="entry name" value="DHQS_C"/>
    <property type="match status" value="1"/>
</dbReference>
<dbReference type="PIRSF" id="PIRSF001455">
    <property type="entry name" value="DHQ_synth"/>
    <property type="match status" value="1"/>
</dbReference>
<dbReference type="SUPFAM" id="SSF56796">
    <property type="entry name" value="Dehydroquinate synthase-like"/>
    <property type="match status" value="1"/>
</dbReference>
<comment type="function">
    <text evidence="1">Catalyzes the conversion of 3-deoxy-D-arabino-heptulosonate 7-phosphate (DAHP) to dehydroquinate (DHQ).</text>
</comment>
<comment type="catalytic activity">
    <reaction evidence="1">
        <text>7-phospho-2-dehydro-3-deoxy-D-arabino-heptonate = 3-dehydroquinate + phosphate</text>
        <dbReference type="Rhea" id="RHEA:21968"/>
        <dbReference type="ChEBI" id="CHEBI:32364"/>
        <dbReference type="ChEBI" id="CHEBI:43474"/>
        <dbReference type="ChEBI" id="CHEBI:58394"/>
        <dbReference type="EC" id="4.2.3.4"/>
    </reaction>
</comment>
<comment type="cofactor">
    <cofactor evidence="1">
        <name>Co(2+)</name>
        <dbReference type="ChEBI" id="CHEBI:48828"/>
    </cofactor>
    <cofactor evidence="1">
        <name>Zn(2+)</name>
        <dbReference type="ChEBI" id="CHEBI:29105"/>
    </cofactor>
    <text evidence="1">Binds 1 divalent metal cation per subunit. Can use either Co(2+) or Zn(2+).</text>
</comment>
<comment type="cofactor">
    <cofactor evidence="1">
        <name>NAD(+)</name>
        <dbReference type="ChEBI" id="CHEBI:57540"/>
    </cofactor>
</comment>
<comment type="pathway">
    <text evidence="1">Metabolic intermediate biosynthesis; chorismate biosynthesis; chorismate from D-erythrose 4-phosphate and phosphoenolpyruvate: step 2/7.</text>
</comment>
<comment type="subcellular location">
    <subcellularLocation>
        <location evidence="1">Cytoplasm</location>
    </subcellularLocation>
</comment>
<comment type="similarity">
    <text evidence="1">Belongs to the sugar phosphate cyclases superfamily. Dehydroquinate synthase family.</text>
</comment>
<feature type="chain" id="PRO_1000119070" description="3-dehydroquinate synthase">
    <location>
        <begin position="1"/>
        <end position="363"/>
    </location>
</feature>
<feature type="binding site" evidence="1">
    <location>
        <begin position="75"/>
        <end position="80"/>
    </location>
    <ligand>
        <name>NAD(+)</name>
        <dbReference type="ChEBI" id="CHEBI:57540"/>
    </ligand>
</feature>
<feature type="binding site" evidence="1">
    <location>
        <begin position="109"/>
        <end position="113"/>
    </location>
    <ligand>
        <name>NAD(+)</name>
        <dbReference type="ChEBI" id="CHEBI:57540"/>
    </ligand>
</feature>
<feature type="binding site" evidence="1">
    <location>
        <begin position="133"/>
        <end position="134"/>
    </location>
    <ligand>
        <name>NAD(+)</name>
        <dbReference type="ChEBI" id="CHEBI:57540"/>
    </ligand>
</feature>
<feature type="binding site" evidence="1">
    <location>
        <position position="146"/>
    </location>
    <ligand>
        <name>NAD(+)</name>
        <dbReference type="ChEBI" id="CHEBI:57540"/>
    </ligand>
</feature>
<feature type="binding site" evidence="1">
    <location>
        <position position="155"/>
    </location>
    <ligand>
        <name>NAD(+)</name>
        <dbReference type="ChEBI" id="CHEBI:57540"/>
    </ligand>
</feature>
<feature type="binding site" evidence="1">
    <location>
        <begin position="173"/>
        <end position="176"/>
    </location>
    <ligand>
        <name>NAD(+)</name>
        <dbReference type="ChEBI" id="CHEBI:57540"/>
    </ligand>
</feature>
<feature type="binding site" evidence="1">
    <location>
        <position position="188"/>
    </location>
    <ligand>
        <name>Zn(2+)</name>
        <dbReference type="ChEBI" id="CHEBI:29105"/>
    </ligand>
</feature>
<feature type="binding site" evidence="1">
    <location>
        <position position="251"/>
    </location>
    <ligand>
        <name>Zn(2+)</name>
        <dbReference type="ChEBI" id="CHEBI:29105"/>
    </ligand>
</feature>
<feature type="binding site" evidence="1">
    <location>
        <position position="267"/>
    </location>
    <ligand>
        <name>Zn(2+)</name>
        <dbReference type="ChEBI" id="CHEBI:29105"/>
    </ligand>
</feature>